<sequence length="392" mass="43469">MASLRRGFGSDQTTASDTKMHYRQLAPTASVRVSPLCLGAMNFGEAHKARYGECSKETAFSIMDYFYSQGGNFIDTANGYQAGESEQWVGEWMKSRDNRDEIVLATKYSTGYMNHEKDKIQINYGGNSAKSMKVSVAASLKKLQTNYIDILYIHWWDYSTSIPELMHSLNDLVVSGQVLYLGVSDTPAWVVSKANQYARDHGLRQFVIYQGMWNAAMRDFERDIIPMCRDEGMGLAPYGTLGQGSFQTEEGRKQREKDNPGRKFGAKSLPYVEVSKVLEKLANAKGKAITDVALAYVLQKTPYVFPIVGGRKLEHIQGNVAALQVALSEAEVEEIEAAYPFDAGFPHTFLSGTLFDGAKPTAAQGPGDVFLTKWQGDIDWVEAPKAIRPSGQ</sequence>
<evidence type="ECO:0000250" key="1">
    <source>
        <dbReference type="UniProtKB" id="P46336"/>
    </source>
</evidence>
<evidence type="ECO:0000250" key="2">
    <source>
        <dbReference type="UniProtKB" id="Q6UEH5"/>
    </source>
</evidence>
<evidence type="ECO:0000256" key="3">
    <source>
        <dbReference type="SAM" id="MobiDB-lite"/>
    </source>
</evidence>
<evidence type="ECO:0000269" key="4">
    <source>
    </source>
</evidence>
<evidence type="ECO:0000269" key="5">
    <source>
    </source>
</evidence>
<evidence type="ECO:0000269" key="6">
    <source>
    </source>
</evidence>
<evidence type="ECO:0000303" key="7">
    <source>
    </source>
</evidence>
<evidence type="ECO:0000305" key="8"/>
<evidence type="ECO:0000305" key="9">
    <source>
    </source>
</evidence>
<evidence type="ECO:0000305" key="10">
    <source>
    </source>
</evidence>
<evidence type="ECO:0000305" key="11">
    <source>
    </source>
</evidence>
<gene>
    <name evidence="7" type="primary">norB</name>
    <name type="ORF">DOTSEDRAFT_75044</name>
</gene>
<protein>
    <recommendedName>
        <fullName evidence="7">Norsolorinic acid reductase B</fullName>
        <ecNumber evidence="7 10">1.1.1.-</ecNumber>
    </recommendedName>
    <alternativeName>
        <fullName evidence="7">Dothistromin biosynthesis protein norB</fullName>
    </alternativeName>
</protein>
<comment type="function">
    <text evidence="2 4 5 7 9 10 11">Norsolorinic acid reductase; part of the fragmented gene cluster that mediates the biosynthesis of dothistromin (DOTH), a polyketide toxin very similar in structure to the aflatoxin precursor, versicolorin B (PubMed:12039746, PubMed:17683963, PubMed:22069571, PubMed:23207690, PubMed:23448391). The first step of the pathway is the conversion of acetate to norsolorinic acid (NOR) and requires the fatty acid synthase subunits hexA and hexB, as well as the polyketide synthase pksA (PubMed:16649078, PubMed:23207690). PksA combines a hexanoyl starter unit and 7 malonyl-CoA extender units to synthesize the precursor NOR (By similarity). The hexanoyl starter unit is provided to the acyl-carrier protein (ACP) domain by the fungal fatty acid synthase hexA/hexB (By similarity). The second step is the conversion of NOR to averantin (AVN) and requires the norsolorinic acid ketoreductase nor1, which catalyzes the dehydration of norsolorinic acid to form (1'S)-averantin (PubMed:23207690). The cytochrome P450 monooxygenase avnA then catalyzes the hydroxylation of AVN to 5'hydroxyaverantin (HAVN) (PubMed:23207690). The next step is performed by adhA that transforms HAVN to averufin (AVF) (PubMed:23207690). Averufin might then be converted to hydroxyversicolorone by cypX and avfA (PubMed:23207690). Hydroxyversicolorone is further converted versiconal hemiacetal acetate (VHA) by moxY (PubMed:23207690). VHA is then the substrate for the versiconal hemiacetal acetate esterase est1 to yield versiconal (VAL) (PubMed:23207690). Versicolorin B synthase vbsA then converts VAL to versicolorin B (VERB) by closing the bisfuran ring (PubMed:16649078, PubMed:23207690). Then, the activity of the versicolorin B desaturase verB leads to versicolorin A (VERA) (PubMed:23207690). DotB, a predicted chloroperoxidase, may perform epoxidation of the A-ring of VERA (PubMed:23207690). Alternatively, a cytochrome P450, such as cypX or avnA could catalyze this step (PubMed:23207690). It is also possible that another, uncharacterized, cytochrome P450 enzyme is responsible for this step (PubMed:23207690). Opening of the epoxide could potentially be achieved by the epoxide hydrolase epoA (PubMed:23207690). However, epoA seems not to be required for DOTH biosynthesis, but other epoxide hydrolases may have the ability to complement this hydrolysis (PubMed:23207690). Alternatively, opening of the epoxide ring could be achieved non-enzymatically (PubMed:23207690). The next step is the deoxygenation of ring A to yield the 5,8-dihydroxyanthraquinone which is most likely catalyzed by the NADPH dehydrogenase encoded by ver1 (PubMed:23207690). The last stages of DOTH biosynthesis are proposed to involve hydroxylation of the bisfuran (PubMed:23207690). OrdB and norB might have oxidative roles here (PubMed:23207690). An alternative possibility is that cytochrome P450 monoogenases such as avnA and cypX might perform these steps in addition to previously proposed steps (PubMed:23207690).</text>
</comment>
<comment type="pathway">
    <text evidence="7 10">Mycotoxin biosynthesis.</text>
</comment>
<comment type="induction">
    <text evidence="6">Expression is positively regulated by the dothistromin-specific transcription factor aflR (PubMed:23207690).</text>
</comment>
<comment type="similarity">
    <text evidence="8">Belongs to the aldo/keto reductase family. Aldo/keto reductase 2 subfamily.</text>
</comment>
<name>NORB_DOTSN</name>
<organism>
    <name type="scientific">Dothistroma septosporum (strain NZE10 / CBS 128990)</name>
    <name type="common">Red band needle blight fungus</name>
    <name type="synonym">Mycosphaerella pini</name>
    <dbReference type="NCBI Taxonomy" id="675120"/>
    <lineage>
        <taxon>Eukaryota</taxon>
        <taxon>Fungi</taxon>
        <taxon>Dikarya</taxon>
        <taxon>Ascomycota</taxon>
        <taxon>Pezizomycotina</taxon>
        <taxon>Dothideomycetes</taxon>
        <taxon>Dothideomycetidae</taxon>
        <taxon>Mycosphaerellales</taxon>
        <taxon>Mycosphaerellaceae</taxon>
        <taxon>Dothistroma</taxon>
    </lineage>
</organism>
<reference key="1">
    <citation type="journal article" date="2012" name="PLoS Genet.">
        <title>The genomes of the fungal plant pathogens Cladosporium fulvum and Dothistroma septosporum reveal adaptation to different hosts and lifestyles but also signatures of common ancestry.</title>
        <authorList>
            <person name="de Wit P.J.G.M."/>
            <person name="van der Burgt A."/>
            <person name="Oekmen B."/>
            <person name="Stergiopoulos I."/>
            <person name="Abd-Elsalam K.A."/>
            <person name="Aerts A.L."/>
            <person name="Bahkali A.H."/>
            <person name="Beenen H.G."/>
            <person name="Chettri P."/>
            <person name="Cox M.P."/>
            <person name="Datema E."/>
            <person name="de Vries R.P."/>
            <person name="Dhillon B."/>
            <person name="Ganley A.R."/>
            <person name="Griffiths S.A."/>
            <person name="Guo Y."/>
            <person name="Hamelin R.C."/>
            <person name="Henrissat B."/>
            <person name="Kabir M.S."/>
            <person name="Jashni M.K."/>
            <person name="Kema G."/>
            <person name="Klaubauf S."/>
            <person name="Lapidus A."/>
            <person name="Levasseur A."/>
            <person name="Lindquist E."/>
            <person name="Mehrabi R."/>
            <person name="Ohm R.A."/>
            <person name="Owen T.J."/>
            <person name="Salamov A."/>
            <person name="Schwelm A."/>
            <person name="Schijlen E."/>
            <person name="Sun H."/>
            <person name="van den Burg H.A."/>
            <person name="van Ham R.C.H.J."/>
            <person name="Zhang S."/>
            <person name="Goodwin S.B."/>
            <person name="Grigoriev I.V."/>
            <person name="Collemare J."/>
            <person name="Bradshaw R.E."/>
        </authorList>
    </citation>
    <scope>NUCLEOTIDE SEQUENCE [LARGE SCALE GENOMIC DNA]</scope>
    <source>
        <strain>NZE10 / CBS 128990</strain>
    </source>
</reference>
<reference key="2">
    <citation type="journal article" date="2012" name="PLoS Pathog.">
        <title>Diverse lifestyles and strategies of plant pathogenesis encoded in the genomes of eighteen Dothideomycetes fungi.</title>
        <authorList>
            <person name="Ohm R.A."/>
            <person name="Feau N."/>
            <person name="Henrissat B."/>
            <person name="Schoch C.L."/>
            <person name="Horwitz B.A."/>
            <person name="Barry K.W."/>
            <person name="Condon B.J."/>
            <person name="Copeland A.C."/>
            <person name="Dhillon B."/>
            <person name="Glaser F."/>
            <person name="Hesse C.N."/>
            <person name="Kosti I."/>
            <person name="LaButti K."/>
            <person name="Lindquist E.A."/>
            <person name="Lucas S."/>
            <person name="Salamov A.A."/>
            <person name="Bradshaw R.E."/>
            <person name="Ciuffetti L."/>
            <person name="Hamelin R.C."/>
            <person name="Kema G.H.J."/>
            <person name="Lawrence C."/>
            <person name="Scott J.A."/>
            <person name="Spatafora J.W."/>
            <person name="Turgeon B.G."/>
            <person name="de Wit P.J.G.M."/>
            <person name="Zhong S."/>
            <person name="Goodwin S.B."/>
            <person name="Grigoriev I.V."/>
        </authorList>
    </citation>
    <scope>NUCLEOTIDE SEQUENCE [LARGE SCALE GENOMIC DNA]</scope>
    <source>
        <strain>NZE10 / CBS 128990</strain>
    </source>
</reference>
<reference key="3">
    <citation type="journal article" date="2002" name="Appl. Environ. Microbiol.">
        <title>Dothistroma pini, a forest pathogen, contains homologs of aflatoxin biosynthetic pathway genes.</title>
        <authorList>
            <person name="Bradshaw R.E."/>
            <person name="Bhatnagar D."/>
            <person name="Ganley R.J."/>
            <person name="Gillman C.J."/>
            <person name="Monahan B.J."/>
            <person name="Seconi J.M."/>
        </authorList>
    </citation>
    <scope>FUNCTION</scope>
</reference>
<reference key="4">
    <citation type="journal article" date="2006" name="Mycopathologia">
        <title>A polyketide synthase gene required for biosynthesis of the aflatoxin-like toxin, dothistromin.</title>
        <authorList>
            <person name="Bradshaw R.E."/>
            <person name="Jin H."/>
            <person name="Morgan B.S."/>
            <person name="Schwelm A."/>
            <person name="Teddy O.R."/>
            <person name="Young C.A."/>
            <person name="Zhang S."/>
        </authorList>
    </citation>
    <scope>FUNCTION</scope>
</reference>
<reference key="5">
    <citation type="journal article" date="2007" name="Fungal Genet. Biol.">
        <title>A fragmented aflatoxin-like gene cluster in the forest pathogen Dothistroma septosporum.</title>
        <authorList>
            <person name="Zhang S."/>
            <person name="Schwelm A."/>
            <person name="Jin H."/>
            <person name="Collins L.J."/>
            <person name="Bradshaw R.E."/>
        </authorList>
    </citation>
    <scope>FUNCTION</scope>
</reference>
<reference key="6">
    <citation type="journal article" date="2010" name="Toxins">
        <title>Genetics of dothistromin biosynthesis of Dothistroma septosporum: an update.</title>
        <authorList>
            <person name="Schwelm A."/>
            <person name="Bradshaw R.E."/>
        </authorList>
    </citation>
    <scope>REVIEW ON FUNCTION</scope>
    <scope>PATHWAY</scope>
</reference>
<reference key="7">
    <citation type="journal article" date="2013" name="Fungal Genet. Biol.">
        <title>Dothistromin genes at multiple separate loci are regulated by AflR.</title>
        <authorList>
            <person name="Chettri P."/>
            <person name="Ehrlich K.C."/>
            <person name="Cary J.W."/>
            <person name="Collemare J."/>
            <person name="Cox M.P."/>
            <person name="Griffiths S.A."/>
            <person name="Olson M.A."/>
            <person name="de Wit P.J."/>
            <person name="Bradshaw R.E."/>
        </authorList>
    </citation>
    <scope>FUNCTION</scope>
    <scope>INDUCTION</scope>
    <scope>PATHWAY</scope>
</reference>
<reference key="8">
    <citation type="journal article" date="2013" name="New Phytol.">
        <title>Fragmentation of an aflatoxin-like gene cluster in a forest pathogen.</title>
        <authorList>
            <person name="Bradshaw R.E."/>
            <person name="Slot J.C."/>
            <person name="Moore G.G."/>
            <person name="Chettri P."/>
            <person name="de Wit P.J."/>
            <person name="Ehrlich K.C."/>
            <person name="Ganley A.R."/>
            <person name="Olson M.A."/>
            <person name="Rokas A."/>
            <person name="Carbone I."/>
            <person name="Cox M.P."/>
        </authorList>
    </citation>
    <scope>FUNCTION</scope>
</reference>
<feature type="chain" id="PRO_0000443473" description="Norsolorinic acid reductase B">
    <location>
        <begin position="1"/>
        <end position="392"/>
    </location>
</feature>
<feature type="region of interest" description="Disordered" evidence="3">
    <location>
        <begin position="242"/>
        <end position="263"/>
    </location>
</feature>
<feature type="compositionally biased region" description="Basic and acidic residues" evidence="3">
    <location>
        <begin position="249"/>
        <end position="261"/>
    </location>
</feature>
<feature type="active site" description="Proton donor" evidence="1">
    <location>
        <position position="80"/>
    </location>
</feature>
<feature type="binding site" evidence="1">
    <location>
        <position position="75"/>
    </location>
    <ligand>
        <name>NADP(+)</name>
        <dbReference type="ChEBI" id="CHEBI:58349"/>
    </ligand>
</feature>
<feature type="binding site" evidence="1">
    <location>
        <begin position="184"/>
        <end position="185"/>
    </location>
    <ligand>
        <name>NADP(+)</name>
        <dbReference type="ChEBI" id="CHEBI:58349"/>
    </ligand>
</feature>
<feature type="binding site" evidence="1">
    <location>
        <position position="210"/>
    </location>
    <ligand>
        <name>NADP(+)</name>
        <dbReference type="ChEBI" id="CHEBI:58349"/>
    </ligand>
</feature>
<feature type="binding site" evidence="1">
    <location>
        <begin position="239"/>
        <end position="249"/>
    </location>
    <ligand>
        <name>NADP(+)</name>
        <dbReference type="ChEBI" id="CHEBI:58349"/>
    </ligand>
</feature>
<feature type="binding site" evidence="1">
    <location>
        <begin position="311"/>
        <end position="319"/>
    </location>
    <ligand>
        <name>NADP(+)</name>
        <dbReference type="ChEBI" id="CHEBI:58349"/>
    </ligand>
</feature>
<feature type="site" description="Lowers pKa of active site Tyr" evidence="1">
    <location>
        <position position="107"/>
    </location>
</feature>
<keyword id="KW-0521">NADP</keyword>
<keyword id="KW-0560">Oxidoreductase</keyword>
<keyword id="KW-1185">Reference proteome</keyword>
<dbReference type="EC" id="1.1.1.-" evidence="7 10"/>
<dbReference type="EMBL" id="KB446545">
    <property type="protein sequence ID" value="EME39161.1"/>
    <property type="molecule type" value="Genomic_DNA"/>
</dbReference>
<dbReference type="SMR" id="M2YJQ2"/>
<dbReference type="STRING" id="675120.M2YJQ2"/>
<dbReference type="EnsemblFungi" id="EME39161">
    <property type="protein sequence ID" value="EME39161"/>
    <property type="gene ID" value="DOTSEDRAFT_75044"/>
</dbReference>
<dbReference type="eggNOG" id="KOG1575">
    <property type="taxonomic scope" value="Eukaryota"/>
</dbReference>
<dbReference type="HOGENOM" id="CLU_023205_2_2_1"/>
<dbReference type="OMA" id="SDNYAFW"/>
<dbReference type="OrthoDB" id="48988at2759"/>
<dbReference type="Proteomes" id="UP000016933">
    <property type="component" value="Unassembled WGS sequence"/>
</dbReference>
<dbReference type="GO" id="GO:0016491">
    <property type="term" value="F:oxidoreductase activity"/>
    <property type="evidence" value="ECO:0007669"/>
    <property type="project" value="UniProtKB-KW"/>
</dbReference>
<dbReference type="CDD" id="cd19146">
    <property type="entry name" value="AKR_AKR9A1-2"/>
    <property type="match status" value="1"/>
</dbReference>
<dbReference type="Gene3D" id="3.20.20.100">
    <property type="entry name" value="NADP-dependent oxidoreductase domain"/>
    <property type="match status" value="1"/>
</dbReference>
<dbReference type="InterPro" id="IPR050523">
    <property type="entry name" value="AKR_Detox_Biosynth"/>
</dbReference>
<dbReference type="InterPro" id="IPR023210">
    <property type="entry name" value="NADP_OxRdtase_dom"/>
</dbReference>
<dbReference type="InterPro" id="IPR036812">
    <property type="entry name" value="NADP_OxRdtase_dom_sf"/>
</dbReference>
<dbReference type="PANTHER" id="PTHR43364">
    <property type="entry name" value="NADH-SPECIFIC METHYLGLYOXAL REDUCTASE-RELATED"/>
    <property type="match status" value="1"/>
</dbReference>
<dbReference type="PANTHER" id="PTHR43364:SF7">
    <property type="entry name" value="NADP-DEPENDENT OXIDOREDUCTASE DOMAIN-CONTAINING PROTEIN-RELATED"/>
    <property type="match status" value="1"/>
</dbReference>
<dbReference type="Pfam" id="PF00248">
    <property type="entry name" value="Aldo_ket_red"/>
    <property type="match status" value="1"/>
</dbReference>
<dbReference type="SUPFAM" id="SSF51430">
    <property type="entry name" value="NAD(P)-linked oxidoreductase"/>
    <property type="match status" value="1"/>
</dbReference>
<proteinExistence type="evidence at transcript level"/>
<accession>M2YJQ2</accession>